<name>RS4_NITV9</name>
<comment type="function">
    <text evidence="1">One of the primary rRNA binding proteins, it binds directly to 16S rRNA where it nucleates assembly of the body of the 30S subunit.</text>
</comment>
<comment type="function">
    <text evidence="1">With S5 and S12 plays an important role in translational accuracy.</text>
</comment>
<comment type="subunit">
    <text evidence="1">Part of the 30S ribosomal subunit. Contacts protein S5. The interaction surface between S4 and S5 is involved in control of translational fidelity.</text>
</comment>
<comment type="similarity">
    <text evidence="1">Belongs to the universal ribosomal protein uS4 family.</text>
</comment>
<gene>
    <name evidence="1" type="primary">rpsD</name>
    <name type="ordered locus">DvMF_0104</name>
</gene>
<protein>
    <recommendedName>
        <fullName evidence="1">Small ribosomal subunit protein uS4</fullName>
    </recommendedName>
    <alternativeName>
        <fullName evidence="2">30S ribosomal protein S4</fullName>
    </alternativeName>
</protein>
<feature type="chain" id="PRO_1000140721" description="Small ribosomal subunit protein uS4">
    <location>
        <begin position="1"/>
        <end position="208"/>
    </location>
</feature>
<feature type="domain" description="S4 RNA-binding" evidence="1">
    <location>
        <begin position="98"/>
        <end position="161"/>
    </location>
</feature>
<reference key="1">
    <citation type="submission" date="2008-10" db="EMBL/GenBank/DDBJ databases">
        <title>Complete sequence of Desulfovibrio vulgaris str. 'Miyazaki F'.</title>
        <authorList>
            <person name="Lucas S."/>
            <person name="Copeland A."/>
            <person name="Lapidus A."/>
            <person name="Glavina del Rio T."/>
            <person name="Dalin E."/>
            <person name="Tice H."/>
            <person name="Bruce D."/>
            <person name="Goodwin L."/>
            <person name="Pitluck S."/>
            <person name="Sims D."/>
            <person name="Brettin T."/>
            <person name="Detter J.C."/>
            <person name="Han C."/>
            <person name="Larimer F."/>
            <person name="Land M."/>
            <person name="Hauser L."/>
            <person name="Kyrpides N."/>
            <person name="Mikhailova N."/>
            <person name="Hazen T.C."/>
            <person name="Richardson P."/>
        </authorList>
    </citation>
    <scope>NUCLEOTIDE SEQUENCE [LARGE SCALE GENOMIC DNA]</scope>
    <source>
        <strain>DSM 19637 / Miyazaki F</strain>
    </source>
</reference>
<sequence length="208" mass="23922">MAKYNDAKCRMCRREGTKLFLKGDRCYTDKCAYDRRPYAPGQHGRARKKVSDYAVQLREKQKVRRVYGVLERQFRGYFHKADMAKGVTGANLLAILERRLDNVIYRLGFANSRQQARQLVRHGIFTLNGRKANIPSMQVRVGDIIEVPEASRKIPVIAEAQEVIARRGCPSWLEVDGPSFKGTVKALPQREDIQFPINEHLIVELYSK</sequence>
<accession>B8DNK8</accession>
<proteinExistence type="inferred from homology"/>
<keyword id="KW-0687">Ribonucleoprotein</keyword>
<keyword id="KW-0689">Ribosomal protein</keyword>
<keyword id="KW-0694">RNA-binding</keyword>
<keyword id="KW-0699">rRNA-binding</keyword>
<dbReference type="EMBL" id="CP001197">
    <property type="protein sequence ID" value="ACL07065.1"/>
    <property type="molecule type" value="Genomic_DNA"/>
</dbReference>
<dbReference type="SMR" id="B8DNK8"/>
<dbReference type="STRING" id="883.DvMF_0104"/>
<dbReference type="KEGG" id="dvm:DvMF_0104"/>
<dbReference type="eggNOG" id="COG0522">
    <property type="taxonomic scope" value="Bacteria"/>
</dbReference>
<dbReference type="HOGENOM" id="CLU_092403_0_2_7"/>
<dbReference type="OrthoDB" id="9803672at2"/>
<dbReference type="GO" id="GO:0015935">
    <property type="term" value="C:small ribosomal subunit"/>
    <property type="evidence" value="ECO:0007669"/>
    <property type="project" value="InterPro"/>
</dbReference>
<dbReference type="GO" id="GO:0019843">
    <property type="term" value="F:rRNA binding"/>
    <property type="evidence" value="ECO:0007669"/>
    <property type="project" value="UniProtKB-UniRule"/>
</dbReference>
<dbReference type="GO" id="GO:0003735">
    <property type="term" value="F:structural constituent of ribosome"/>
    <property type="evidence" value="ECO:0007669"/>
    <property type="project" value="InterPro"/>
</dbReference>
<dbReference type="GO" id="GO:0042274">
    <property type="term" value="P:ribosomal small subunit biogenesis"/>
    <property type="evidence" value="ECO:0007669"/>
    <property type="project" value="TreeGrafter"/>
</dbReference>
<dbReference type="GO" id="GO:0006412">
    <property type="term" value="P:translation"/>
    <property type="evidence" value="ECO:0007669"/>
    <property type="project" value="UniProtKB-UniRule"/>
</dbReference>
<dbReference type="CDD" id="cd00165">
    <property type="entry name" value="S4"/>
    <property type="match status" value="1"/>
</dbReference>
<dbReference type="FunFam" id="1.10.1050.10:FF:000001">
    <property type="entry name" value="30S ribosomal protein S4"/>
    <property type="match status" value="1"/>
</dbReference>
<dbReference type="FunFam" id="3.10.290.10:FF:000001">
    <property type="entry name" value="30S ribosomal protein S4"/>
    <property type="match status" value="1"/>
</dbReference>
<dbReference type="Gene3D" id="1.10.1050.10">
    <property type="entry name" value="Ribosomal Protein S4 Delta 41, Chain A, domain 1"/>
    <property type="match status" value="1"/>
</dbReference>
<dbReference type="Gene3D" id="3.10.290.10">
    <property type="entry name" value="RNA-binding S4 domain"/>
    <property type="match status" value="1"/>
</dbReference>
<dbReference type="HAMAP" id="MF_01306_B">
    <property type="entry name" value="Ribosomal_uS4_B"/>
    <property type="match status" value="1"/>
</dbReference>
<dbReference type="InterPro" id="IPR022801">
    <property type="entry name" value="Ribosomal_uS4"/>
</dbReference>
<dbReference type="InterPro" id="IPR005709">
    <property type="entry name" value="Ribosomal_uS4_bac-type"/>
</dbReference>
<dbReference type="InterPro" id="IPR018079">
    <property type="entry name" value="Ribosomal_uS4_CS"/>
</dbReference>
<dbReference type="InterPro" id="IPR001912">
    <property type="entry name" value="Ribosomal_uS4_N"/>
</dbReference>
<dbReference type="InterPro" id="IPR002942">
    <property type="entry name" value="S4_RNA-bd"/>
</dbReference>
<dbReference type="InterPro" id="IPR036986">
    <property type="entry name" value="S4_RNA-bd_sf"/>
</dbReference>
<dbReference type="NCBIfam" id="NF003717">
    <property type="entry name" value="PRK05327.1"/>
    <property type="match status" value="1"/>
</dbReference>
<dbReference type="NCBIfam" id="TIGR01017">
    <property type="entry name" value="rpsD_bact"/>
    <property type="match status" value="1"/>
</dbReference>
<dbReference type="PANTHER" id="PTHR11831">
    <property type="entry name" value="30S 40S RIBOSOMAL PROTEIN"/>
    <property type="match status" value="1"/>
</dbReference>
<dbReference type="PANTHER" id="PTHR11831:SF4">
    <property type="entry name" value="SMALL RIBOSOMAL SUBUNIT PROTEIN US4M"/>
    <property type="match status" value="1"/>
</dbReference>
<dbReference type="Pfam" id="PF00163">
    <property type="entry name" value="Ribosomal_S4"/>
    <property type="match status" value="1"/>
</dbReference>
<dbReference type="Pfam" id="PF01479">
    <property type="entry name" value="S4"/>
    <property type="match status" value="1"/>
</dbReference>
<dbReference type="SMART" id="SM01390">
    <property type="entry name" value="Ribosomal_S4"/>
    <property type="match status" value="1"/>
</dbReference>
<dbReference type="SMART" id="SM00363">
    <property type="entry name" value="S4"/>
    <property type="match status" value="1"/>
</dbReference>
<dbReference type="SUPFAM" id="SSF55174">
    <property type="entry name" value="Alpha-L RNA-binding motif"/>
    <property type="match status" value="1"/>
</dbReference>
<dbReference type="PROSITE" id="PS00632">
    <property type="entry name" value="RIBOSOMAL_S4"/>
    <property type="match status" value="1"/>
</dbReference>
<dbReference type="PROSITE" id="PS50889">
    <property type="entry name" value="S4"/>
    <property type="match status" value="1"/>
</dbReference>
<evidence type="ECO:0000255" key="1">
    <source>
        <dbReference type="HAMAP-Rule" id="MF_01306"/>
    </source>
</evidence>
<evidence type="ECO:0000305" key="2"/>
<organism>
    <name type="scientific">Nitratidesulfovibrio vulgaris (strain DSM 19637 / Miyazaki F)</name>
    <name type="common">Desulfovibrio vulgaris</name>
    <dbReference type="NCBI Taxonomy" id="883"/>
    <lineage>
        <taxon>Bacteria</taxon>
        <taxon>Pseudomonadati</taxon>
        <taxon>Thermodesulfobacteriota</taxon>
        <taxon>Desulfovibrionia</taxon>
        <taxon>Desulfovibrionales</taxon>
        <taxon>Desulfovibrionaceae</taxon>
        <taxon>Nitratidesulfovibrio</taxon>
    </lineage>
</organism>